<keyword id="KW-1003">Cell membrane</keyword>
<keyword id="KW-0449">Lipoprotein</keyword>
<keyword id="KW-0472">Membrane</keyword>
<keyword id="KW-0564">Palmitate</keyword>
<keyword id="KW-1185">Reference proteome</keyword>
<keyword id="KW-0732">Signal</keyword>
<feature type="signal peptide" evidence="1">
    <location>
        <begin position="1"/>
        <end position="30"/>
    </location>
</feature>
<feature type="chain" id="PRO_0000018115" description="Putative lipoprotein LppP">
    <location>
        <begin position="31"/>
        <end position="175"/>
    </location>
</feature>
<feature type="lipid moiety-binding region" description="N-palmitoyl cysteine" evidence="1">
    <location>
        <position position="31"/>
    </location>
</feature>
<feature type="lipid moiety-binding region" description="S-diacylglycerol cysteine" evidence="1">
    <location>
        <position position="31"/>
    </location>
</feature>
<comment type="subcellular location">
    <subcellularLocation>
        <location evidence="1">Cell membrane</location>
        <topology evidence="1">Lipid-anchor</topology>
    </subcellularLocation>
</comment>
<reference key="1">
    <citation type="journal article" date="2003" name="Proc. Natl. Acad. Sci. U.S.A.">
        <title>The complete genome sequence of Mycobacterium bovis.</title>
        <authorList>
            <person name="Garnier T."/>
            <person name="Eiglmeier K."/>
            <person name="Camus J.-C."/>
            <person name="Medina N."/>
            <person name="Mansoor H."/>
            <person name="Pryor M."/>
            <person name="Duthoy S."/>
            <person name="Grondin S."/>
            <person name="Lacroix C."/>
            <person name="Monsempe C."/>
            <person name="Simon S."/>
            <person name="Harris B."/>
            <person name="Atkin R."/>
            <person name="Doggett J."/>
            <person name="Mayes R."/>
            <person name="Keating L."/>
            <person name="Wheeler P.R."/>
            <person name="Parkhill J."/>
            <person name="Barrell B.G."/>
            <person name="Cole S.T."/>
            <person name="Gordon S.V."/>
            <person name="Hewinson R.G."/>
        </authorList>
    </citation>
    <scope>NUCLEOTIDE SEQUENCE [LARGE SCALE GENOMIC DNA]</scope>
    <source>
        <strain>ATCC BAA-935 / AF2122/97</strain>
    </source>
</reference>
<reference key="2">
    <citation type="journal article" date="2017" name="Genome Announc.">
        <title>Updated reference genome sequence and annotation of Mycobacterium bovis AF2122/97.</title>
        <authorList>
            <person name="Malone K.M."/>
            <person name="Farrell D."/>
            <person name="Stuber T.P."/>
            <person name="Schubert O.T."/>
            <person name="Aebersold R."/>
            <person name="Robbe-Austerman S."/>
            <person name="Gordon S.V."/>
        </authorList>
    </citation>
    <scope>NUCLEOTIDE SEQUENCE [LARGE SCALE GENOMIC DNA]</scope>
    <scope>GENOME REANNOTATION</scope>
    <source>
        <strain>ATCC BAA-935 / AF2122/97</strain>
    </source>
</reference>
<name>LPPP_MYCBO</name>
<dbReference type="EMBL" id="LT708304">
    <property type="protein sequence ID" value="SIU00969.1"/>
    <property type="molecule type" value="Genomic_DNA"/>
</dbReference>
<dbReference type="RefSeq" id="NP_856006.1">
    <property type="nucleotide sequence ID" value="NC_002945.3"/>
</dbReference>
<dbReference type="RefSeq" id="WP_003411974.1">
    <property type="nucleotide sequence ID" value="NC_002945.4"/>
</dbReference>
<dbReference type="KEGG" id="mbo:BQ2027_MB2357C"/>
<dbReference type="PATRIC" id="fig|233413.5.peg.2585"/>
<dbReference type="Proteomes" id="UP000001419">
    <property type="component" value="Chromosome"/>
</dbReference>
<dbReference type="GO" id="GO:0005886">
    <property type="term" value="C:plasma membrane"/>
    <property type="evidence" value="ECO:0007669"/>
    <property type="project" value="UniProtKB-SubCell"/>
</dbReference>
<dbReference type="InterPro" id="IPR025971">
    <property type="entry name" value="LppP/LprE"/>
</dbReference>
<dbReference type="Pfam" id="PF14041">
    <property type="entry name" value="Lipoprotein_21"/>
    <property type="match status" value="1"/>
</dbReference>
<dbReference type="PROSITE" id="PS51257">
    <property type="entry name" value="PROKAR_LIPOPROTEIN"/>
    <property type="match status" value="1"/>
</dbReference>
<accession>P65303</accession>
<accession>A0A1R3Y0W2</accession>
<accession>P71882</accession>
<accession>X2BKC1</accession>
<organism>
    <name type="scientific">Mycobacterium bovis (strain ATCC BAA-935 / AF2122/97)</name>
    <dbReference type="NCBI Taxonomy" id="233413"/>
    <lineage>
        <taxon>Bacteria</taxon>
        <taxon>Bacillati</taxon>
        <taxon>Actinomycetota</taxon>
        <taxon>Actinomycetes</taxon>
        <taxon>Mycobacteriales</taxon>
        <taxon>Mycobacteriaceae</taxon>
        <taxon>Mycobacterium</taxon>
        <taxon>Mycobacterium tuberculosis complex</taxon>
    </lineage>
</organism>
<gene>
    <name type="primary">lppP</name>
    <name type="ordered locus">BQ2027_MB2357C</name>
</gene>
<sequence>MRRQRSAVPILALLALLALLALIVGLGASGCAWKPPTTRPSPPNTCKDSDGPTADTVRQAIAAVPIVVPGSKWVEITRGHTRNCRLHWVQIIPTIASQSTPQQLLFFDRNIPLGSPTRNPKPYITVLPAGDDTVTVQYQWQIGSDQECCPTGIGTVRFHIGSDGKLEALGSIPHQ</sequence>
<protein>
    <recommendedName>
        <fullName>Putative lipoprotein LppP</fullName>
    </recommendedName>
</protein>
<evidence type="ECO:0000255" key="1">
    <source>
        <dbReference type="PROSITE-ProRule" id="PRU00303"/>
    </source>
</evidence>
<proteinExistence type="inferred from homology"/>